<protein>
    <recommendedName>
        <fullName evidence="4">Beta-lactamase CMY-4</fullName>
        <ecNumber evidence="4">3.5.2.6</ecNumber>
    </recommendedName>
</protein>
<organism evidence="11">
    <name type="scientific">Klebsiella pneumoniae</name>
    <dbReference type="NCBI Taxonomy" id="573"/>
    <lineage>
        <taxon>Bacteria</taxon>
        <taxon>Pseudomonadati</taxon>
        <taxon>Pseudomonadota</taxon>
        <taxon>Gammaproteobacteria</taxon>
        <taxon>Enterobacterales</taxon>
        <taxon>Enterobacteriaceae</taxon>
        <taxon>Klebsiella/Raoultella group</taxon>
        <taxon>Klebsiella</taxon>
        <taxon>Klebsiella pneumoniae complex</taxon>
    </lineage>
</organism>
<name>BLC04_KLEPN</name>
<comment type="function">
    <text evidence="5">Class C beta-lactamase which confers resistance to penicillins and cephalosporins.</text>
</comment>
<comment type="catalytic activity">
    <reaction evidence="4">
        <text>a beta-lactam + H2O = a substituted beta-amino acid</text>
        <dbReference type="Rhea" id="RHEA:20401"/>
        <dbReference type="ChEBI" id="CHEBI:15377"/>
        <dbReference type="ChEBI" id="CHEBI:35627"/>
        <dbReference type="ChEBI" id="CHEBI:140347"/>
        <dbReference type="EC" id="3.5.2.6"/>
    </reaction>
</comment>
<comment type="miscellaneous">
    <text evidence="9">The class C beta-lactamase family has a specific amino-acid numbering system known as SANC, for structural alignment-based numbering of class C beta-lactamases, or else the simpler name structural position. A multiple sequence alignment was used to derive a consensus sequence and then the consensus was numbered taking into account insertions and deletions. This allows use of identical numbers, e.g. for active site residues, despite differences in protein length. UniProt always uses natural numbering of residues, hence there appear to be differences in numbering between this entry and some papers.</text>
</comment>
<comment type="similarity">
    <text evidence="4 8">Belongs to the class-C beta-lactamase family.</text>
</comment>
<gene>
    <name evidence="11 12" type="primary">blaCMY-4</name>
    <name evidence="13" type="synonym">ampC_2</name>
    <name evidence="6 7" type="synonym">CMY-4</name>
    <name evidence="13" type="ORF">NCTC13443_00101</name>
</gene>
<feature type="signal peptide" evidence="2">
    <location>
        <begin position="1"/>
        <end position="20"/>
    </location>
</feature>
<feature type="chain" id="PRO_5015096786" description="Beta-lactamase CMY-4" evidence="2">
    <location>
        <begin position="21"/>
        <end position="381"/>
    </location>
</feature>
<feature type="active site" description="Acyl-ester intermediate" evidence="1 3">
    <location>
        <position position="84"/>
    </location>
</feature>
<feature type="binding site" evidence="1">
    <location>
        <position position="84"/>
    </location>
    <ligand>
        <name>a beta-lactam</name>
        <dbReference type="ChEBI" id="CHEBI:35627"/>
    </ligand>
</feature>
<feature type="binding site" evidence="1">
    <location>
        <position position="140"/>
    </location>
    <ligand>
        <name>a beta-lactam</name>
        <dbReference type="ChEBI" id="CHEBI:35627"/>
    </ligand>
</feature>
<feature type="binding site" evidence="1">
    <location>
        <position position="170"/>
    </location>
    <ligand>
        <name>a beta-lactam</name>
        <dbReference type="ChEBI" id="CHEBI:35627"/>
    </ligand>
</feature>
<feature type="binding site" evidence="1">
    <location>
        <position position="172"/>
    </location>
    <ligand>
        <name>a beta-lactam</name>
        <dbReference type="ChEBI" id="CHEBI:35627"/>
    </ligand>
</feature>
<proteinExistence type="inferred from homology"/>
<evidence type="ECO:0000250" key="1">
    <source>
        <dbReference type="UniProtKB" id="P00811"/>
    </source>
</evidence>
<evidence type="ECO:0000255" key="2"/>
<evidence type="ECO:0000255" key="3">
    <source>
        <dbReference type="PROSITE-ProRule" id="PRU10102"/>
    </source>
</evidence>
<evidence type="ECO:0000255" key="4">
    <source>
        <dbReference type="RuleBase" id="RU361140"/>
    </source>
</evidence>
<evidence type="ECO:0000269" key="5">
    <source>
    </source>
</evidence>
<evidence type="ECO:0000303" key="6">
    <source>
    </source>
</evidence>
<evidence type="ECO:0000303" key="7">
    <source>
    </source>
</evidence>
<evidence type="ECO:0000305" key="8"/>
<evidence type="ECO:0000305" key="9">
    <source>
    </source>
</evidence>
<evidence type="ECO:0000312" key="10">
    <source>
        <dbReference type="EMBL" id="ADZ54167.1"/>
    </source>
</evidence>
<evidence type="ECO:0000312" key="11">
    <source>
        <dbReference type="EMBL" id="CAA76378.1"/>
    </source>
</evidence>
<evidence type="ECO:0000312" key="12">
    <source>
        <dbReference type="EMBL" id="CAI44915.1"/>
    </source>
</evidence>
<evidence type="ECO:0000312" key="13">
    <source>
        <dbReference type="EMBL" id="STS99858.1"/>
    </source>
</evidence>
<evidence type="ECO:0000312" key="14">
    <source>
        <dbReference type="Proteomes" id="UP000255518"/>
    </source>
</evidence>
<reference evidence="11" key="1">
    <citation type="journal article" date="2002" name="J. Antimicrob. Chemother.">
        <title>Characterization of CMY-type beta-lactamases in clinical strains of Proteus mirabilis and Klebsiella pneumoniae isolated in four hospitals in the Paris area.</title>
        <authorList>
            <person name="Decre D."/>
            <person name="Verdet C."/>
            <person name="Raskine L."/>
            <person name="Blanchard H."/>
            <person name="Burghoffer B."/>
            <person name="Philippon A."/>
            <person name="Sanson-Le-Pors M.J."/>
            <person name="Petit J.C."/>
            <person name="Arlet G."/>
        </authorList>
    </citation>
    <scope>NUCLEOTIDE SEQUENCE [GENOMIC DNA]</scope>
    <scope>FUNCTION</scope>
    <source>
        <strain evidence="11">CCH 9701</strain>
    </source>
</reference>
<reference evidence="12" key="2">
    <citation type="journal article" date="2007" name="J. Antimicrob. Chemother.">
        <title>Characterization of the IncA/C plasmid pCC416 encoding VIM-4 and CMY-4 beta-lactamases.</title>
        <authorList>
            <person name="Colinon C."/>
            <person name="Miriagou V."/>
            <person name="Carattoli A."/>
            <person name="Luzzaro F."/>
            <person name="Rossolini G.M."/>
        </authorList>
    </citation>
    <scope>NUCLEOTIDE SEQUENCE [GENOMIC DNA]</scope>
    <source>
        <strain evidence="12">VA-416/02</strain>
        <plasmid evidence="12">pCC416</plasmid>
    </source>
</reference>
<reference evidence="10" key="3">
    <citation type="submission" date="2010-09" db="EMBL/GenBank/DDBJ databases">
        <title>AmpC-type beta-lactamase, CMY-2-like.</title>
        <authorList>
            <person name="Fernandez A."/>
            <person name="Garcia F."/>
            <person name="Coira A."/>
            <person name="Bou G."/>
        </authorList>
    </citation>
    <scope>NUCLEOTIDE SEQUENCE [GENOMIC DNA]</scope>
    <source>
        <strain evidence="10">64038</strain>
        <plasmid evidence="10">unnamed</plasmid>
    </source>
</reference>
<reference evidence="13 14" key="4">
    <citation type="submission" date="2018-06" db="EMBL/GenBank/DDBJ databases">
        <authorList>
            <consortium name="Pathogen Informatics"/>
            <person name="Doyle S."/>
        </authorList>
    </citation>
    <scope>NUCLEOTIDE SEQUENCE [LARGE SCALE GENOMIC DNA]</scope>
    <source>
        <strain evidence="13 14">NCTC13443</strain>
    </source>
</reference>
<reference evidence="8" key="5">
    <citation type="journal article" date="2020" name="Antimicrob. Agents Chemother.">
        <title>A Standard Numbering Scheme for Class C beta-Lactamases.</title>
        <authorList>
            <person name="Mack A.R."/>
            <person name="Barnes M.D."/>
            <person name="Taracila M.A."/>
            <person name="Hujer A.M."/>
            <person name="Hujer K.M."/>
            <person name="Cabot G."/>
            <person name="Feldgarden M."/>
            <person name="Haft D.H."/>
            <person name="Klimke W."/>
            <person name="van den Akker F."/>
            <person name="Vila A.J."/>
            <person name="Smania A."/>
            <person name="Haider S."/>
            <person name="Papp-Wallace K.M."/>
            <person name="Bradford P.A."/>
            <person name="Rossolini G.M."/>
            <person name="Docquier J.D."/>
            <person name="Frere J.M."/>
            <person name="Galleni M."/>
            <person name="Hanson N.D."/>
            <person name="Oliver A."/>
            <person name="Plesiat P."/>
            <person name="Poirel L."/>
            <person name="Nordmann P."/>
            <person name="Palzkill T.G."/>
            <person name="Jacoby G.A."/>
            <person name="Bush K."/>
            <person name="Bonomo R.A."/>
        </authorList>
    </citation>
    <scope>AMINO ACID NUMBERING SCHEME</scope>
</reference>
<geneLocation type="plasmid" evidence="12">
    <name>pCC416</name>
</geneLocation>
<geneLocation type="plasmid" evidence="10">
    <name>unnamed</name>
</geneLocation>
<sequence>MMKKSLCCALLLTASFSTFAAAKTEQQIADIVNRTITPLMQEQAIPGMAVAVIYQGKPYYFTWGKADIANNHPVTQQTLFELGSVSKTFNGVLGGDAIARGEIKLSDPVTKYWPELTGKQWQGIRLLHLATYTAGGLPLQIPDDVRDKAALLHFYQNWQPQWTPGAKRLYANSSIGLFGALAVKPSGMSYEEAMTRRVLQPLKLAHTWITVPQNEQKDYARGYREGKPVHVSPGQLDAEAYGVKSSVIDMARWVQANMDASHVQEKTLQQGIALAQSRYWRIGDMYQGLGWEMLNWPLKADSIINGSDSKVALAALPAVEVNPPAPAVKASWVHKTGSTGGFGSYVAFVPEKNLGIVMLANKSYPNPVRVEAAWRILEKLQ</sequence>
<keyword id="KW-0046">Antibiotic resistance</keyword>
<keyword id="KW-0378">Hydrolase</keyword>
<keyword id="KW-0614">Plasmid</keyword>
<keyword id="KW-0732">Signal</keyword>
<dbReference type="EC" id="3.5.2.6" evidence="4"/>
<dbReference type="EMBL" id="Y16781">
    <property type="protein sequence ID" value="CAA76378.1"/>
    <property type="molecule type" value="Genomic_DNA"/>
</dbReference>
<dbReference type="EMBL" id="AJ875405">
    <property type="protein sequence ID" value="CAI44915.1"/>
    <property type="molecule type" value="Genomic_DNA"/>
</dbReference>
<dbReference type="EMBL" id="HQ267531">
    <property type="protein sequence ID" value="ADZ54167.1"/>
    <property type="molecule type" value="Genomic_DNA"/>
</dbReference>
<dbReference type="EMBL" id="UGKT01000001">
    <property type="protein sequence ID" value="STS99858.1"/>
    <property type="molecule type" value="Genomic_DNA"/>
</dbReference>
<dbReference type="SMR" id="O53044"/>
<dbReference type="CARD" id="ARO:3002015">
    <property type="molecule name" value="CMY-4"/>
    <property type="mechanism identifier" value="ARO:0001004"/>
    <property type="mechanism name" value="antibiotic inactivation"/>
</dbReference>
<dbReference type="MEROPS" id="S12.006"/>
<dbReference type="Proteomes" id="UP000255518">
    <property type="component" value="Unassembled WGS sequence"/>
</dbReference>
<dbReference type="GO" id="GO:0030288">
    <property type="term" value="C:outer membrane-bounded periplasmic space"/>
    <property type="evidence" value="ECO:0007669"/>
    <property type="project" value="InterPro"/>
</dbReference>
<dbReference type="GO" id="GO:0008800">
    <property type="term" value="F:beta-lactamase activity"/>
    <property type="evidence" value="ECO:0007669"/>
    <property type="project" value="UniProtKB-EC"/>
</dbReference>
<dbReference type="GO" id="GO:0017001">
    <property type="term" value="P:antibiotic catabolic process"/>
    <property type="evidence" value="ECO:0007669"/>
    <property type="project" value="InterPro"/>
</dbReference>
<dbReference type="GO" id="GO:0046677">
    <property type="term" value="P:response to antibiotic"/>
    <property type="evidence" value="ECO:0007669"/>
    <property type="project" value="UniProtKB-KW"/>
</dbReference>
<dbReference type="FunFam" id="3.40.710.10:FF:000012">
    <property type="entry name" value="Beta-lactamase"/>
    <property type="match status" value="1"/>
</dbReference>
<dbReference type="Gene3D" id="3.40.710.10">
    <property type="entry name" value="DD-peptidase/beta-lactamase superfamily"/>
    <property type="match status" value="1"/>
</dbReference>
<dbReference type="InterPro" id="IPR050491">
    <property type="entry name" value="Bact_CellWall_Synth/Modif"/>
</dbReference>
<dbReference type="InterPro" id="IPR001466">
    <property type="entry name" value="Beta-lactam-related"/>
</dbReference>
<dbReference type="InterPro" id="IPR012338">
    <property type="entry name" value="Beta-lactam/transpept-like"/>
</dbReference>
<dbReference type="InterPro" id="IPR001586">
    <property type="entry name" value="Beta-lactam_class-C_AS"/>
</dbReference>
<dbReference type="NCBIfam" id="NF033085">
    <property type="entry name" value="bla_class_C"/>
    <property type="match status" value="1"/>
</dbReference>
<dbReference type="NCBIfam" id="NF000191">
    <property type="entry name" value="CMY2"/>
    <property type="match status" value="1"/>
</dbReference>
<dbReference type="NCBIfam" id="NF012173">
    <property type="entry name" value="CMY2-MIR-ACT-EC"/>
    <property type="match status" value="1"/>
</dbReference>
<dbReference type="PANTHER" id="PTHR46825:SF8">
    <property type="entry name" value="BETA-LACTAMASE-RELATED"/>
    <property type="match status" value="1"/>
</dbReference>
<dbReference type="PANTHER" id="PTHR46825">
    <property type="entry name" value="D-ALANYL-D-ALANINE-CARBOXYPEPTIDASE/ENDOPEPTIDASE AMPH"/>
    <property type="match status" value="1"/>
</dbReference>
<dbReference type="Pfam" id="PF00144">
    <property type="entry name" value="Beta-lactamase"/>
    <property type="match status" value="1"/>
</dbReference>
<dbReference type="SUPFAM" id="SSF56601">
    <property type="entry name" value="beta-lactamase/transpeptidase-like"/>
    <property type="match status" value="1"/>
</dbReference>
<dbReference type="PROSITE" id="PS00336">
    <property type="entry name" value="BETA_LACTAMASE_C"/>
    <property type="match status" value="1"/>
</dbReference>
<accession>O53044</accession>